<accession>Q9I0L7</accession>
<reference key="1">
    <citation type="journal article" date="2000" name="Nature">
        <title>Complete genome sequence of Pseudomonas aeruginosa PAO1, an opportunistic pathogen.</title>
        <authorList>
            <person name="Stover C.K."/>
            <person name="Pham X.-Q.T."/>
            <person name="Erwin A.L."/>
            <person name="Mizoguchi S.D."/>
            <person name="Warrener P."/>
            <person name="Hickey M.J."/>
            <person name="Brinkman F.S.L."/>
            <person name="Hufnagle W.O."/>
            <person name="Kowalik D.J."/>
            <person name="Lagrou M."/>
            <person name="Garber R.L."/>
            <person name="Goltry L."/>
            <person name="Tolentino E."/>
            <person name="Westbrock-Wadman S."/>
            <person name="Yuan Y."/>
            <person name="Brody L.L."/>
            <person name="Coulter S.N."/>
            <person name="Folger K.R."/>
            <person name="Kas A."/>
            <person name="Larbig K."/>
            <person name="Lim R.M."/>
            <person name="Smith K.A."/>
            <person name="Spencer D.H."/>
            <person name="Wong G.K.-S."/>
            <person name="Wu Z."/>
            <person name="Paulsen I.T."/>
            <person name="Reizer J."/>
            <person name="Saier M.H. Jr."/>
            <person name="Hancock R.E.W."/>
            <person name="Lory S."/>
            <person name="Olson M.V."/>
        </authorList>
    </citation>
    <scope>NUCLEOTIDE SEQUENCE [LARGE SCALE GENOMIC DNA]</scope>
    <source>
        <strain>ATCC 15692 / DSM 22644 / CIP 104116 / JCM 14847 / LMG 12228 / 1C / PRS 101 / PAO1</strain>
    </source>
</reference>
<sequence>MHAPSQIRLTFNQDHPEPHEHEDEGAGLAVQESKPVLQPPPLYKVVLFNDDYTPMDFVVEVLEVFFNMDREKATKIMLTVHTQGKAVCGLFTRDVAETKAMQVNQYARESQHPLLCEIEKDS</sequence>
<gene>
    <name evidence="1" type="primary">clpS</name>
    <name type="ordered locus">PA2621</name>
</gene>
<organism>
    <name type="scientific">Pseudomonas aeruginosa (strain ATCC 15692 / DSM 22644 / CIP 104116 / JCM 14847 / LMG 12228 / 1C / PRS 101 / PAO1)</name>
    <dbReference type="NCBI Taxonomy" id="208964"/>
    <lineage>
        <taxon>Bacteria</taxon>
        <taxon>Pseudomonadati</taxon>
        <taxon>Pseudomonadota</taxon>
        <taxon>Gammaproteobacteria</taxon>
        <taxon>Pseudomonadales</taxon>
        <taxon>Pseudomonadaceae</taxon>
        <taxon>Pseudomonas</taxon>
    </lineage>
</organism>
<evidence type="ECO:0000255" key="1">
    <source>
        <dbReference type="HAMAP-Rule" id="MF_00302"/>
    </source>
</evidence>
<evidence type="ECO:0000256" key="2">
    <source>
        <dbReference type="SAM" id="MobiDB-lite"/>
    </source>
</evidence>
<evidence type="ECO:0000305" key="3"/>
<feature type="chain" id="PRO_0000215734" description="ATP-dependent Clp protease adapter protein ClpS">
    <location>
        <begin position="1"/>
        <end position="122"/>
    </location>
</feature>
<feature type="region of interest" description="Disordered" evidence="2">
    <location>
        <begin position="1"/>
        <end position="33"/>
    </location>
</feature>
<feature type="compositionally biased region" description="Basic and acidic residues" evidence="2">
    <location>
        <begin position="14"/>
        <end position="24"/>
    </location>
</feature>
<dbReference type="EMBL" id="AE004091">
    <property type="protein sequence ID" value="AAG06009.1"/>
    <property type="status" value="ALT_INIT"/>
    <property type="molecule type" value="Genomic_DNA"/>
</dbReference>
<dbReference type="PIR" id="C83319">
    <property type="entry name" value="C83319"/>
</dbReference>
<dbReference type="RefSeq" id="NP_251311.4">
    <property type="nucleotide sequence ID" value="NC_002516.2"/>
</dbReference>
<dbReference type="RefSeq" id="WP_003097649.1">
    <property type="nucleotide sequence ID" value="NZ_QZGE01000008.1"/>
</dbReference>
<dbReference type="SMR" id="Q9I0L7"/>
<dbReference type="FunCoup" id="Q9I0L7">
    <property type="interactions" value="239"/>
</dbReference>
<dbReference type="STRING" id="208964.PA2621"/>
<dbReference type="PaxDb" id="208964-PA2621"/>
<dbReference type="DNASU" id="882327"/>
<dbReference type="GeneID" id="77220842"/>
<dbReference type="GeneID" id="882327"/>
<dbReference type="KEGG" id="pae:PA2621"/>
<dbReference type="HOGENOM" id="CLU_134358_3_0_6"/>
<dbReference type="InParanoid" id="Q9I0L7"/>
<dbReference type="OrthoDB" id="9796121at2"/>
<dbReference type="PhylomeDB" id="Q9I0L7"/>
<dbReference type="BioCyc" id="PAER208964:G1FZ6-2661-MONOMER"/>
<dbReference type="PHI-base" id="PHI:6212"/>
<dbReference type="Proteomes" id="UP000002438">
    <property type="component" value="Chromosome"/>
</dbReference>
<dbReference type="GO" id="GO:0030163">
    <property type="term" value="P:protein catabolic process"/>
    <property type="evidence" value="ECO:0007669"/>
    <property type="project" value="InterPro"/>
</dbReference>
<dbReference type="GO" id="GO:0006508">
    <property type="term" value="P:proteolysis"/>
    <property type="evidence" value="ECO:0007669"/>
    <property type="project" value="UniProtKB-UniRule"/>
</dbReference>
<dbReference type="FunFam" id="3.30.1390.10:FF:000002">
    <property type="entry name" value="ATP-dependent Clp protease adapter protein ClpS"/>
    <property type="match status" value="1"/>
</dbReference>
<dbReference type="Gene3D" id="3.30.1390.10">
    <property type="match status" value="1"/>
</dbReference>
<dbReference type="HAMAP" id="MF_00302">
    <property type="entry name" value="ClpS"/>
    <property type="match status" value="1"/>
</dbReference>
<dbReference type="InterPro" id="IPR022935">
    <property type="entry name" value="ClpS"/>
</dbReference>
<dbReference type="InterPro" id="IPR003769">
    <property type="entry name" value="ClpS_core"/>
</dbReference>
<dbReference type="InterPro" id="IPR014719">
    <property type="entry name" value="Ribosomal_bL12_C/ClpS-like"/>
</dbReference>
<dbReference type="NCBIfam" id="NF000669">
    <property type="entry name" value="PRK00033.1-2"/>
    <property type="match status" value="1"/>
</dbReference>
<dbReference type="NCBIfam" id="NF000670">
    <property type="entry name" value="PRK00033.1-3"/>
    <property type="match status" value="1"/>
</dbReference>
<dbReference type="NCBIfam" id="NF000672">
    <property type="entry name" value="PRK00033.1-5"/>
    <property type="match status" value="1"/>
</dbReference>
<dbReference type="PANTHER" id="PTHR33473:SF19">
    <property type="entry name" value="ATP-DEPENDENT CLP PROTEASE ADAPTER PROTEIN CLPS"/>
    <property type="match status" value="1"/>
</dbReference>
<dbReference type="PANTHER" id="PTHR33473">
    <property type="entry name" value="ATP-DEPENDENT CLP PROTEASE ADAPTER PROTEIN CLPS1, CHLOROPLASTIC"/>
    <property type="match status" value="1"/>
</dbReference>
<dbReference type="Pfam" id="PF02617">
    <property type="entry name" value="ClpS"/>
    <property type="match status" value="1"/>
</dbReference>
<dbReference type="SUPFAM" id="SSF54736">
    <property type="entry name" value="ClpS-like"/>
    <property type="match status" value="1"/>
</dbReference>
<keyword id="KW-1185">Reference proteome</keyword>
<protein>
    <recommendedName>
        <fullName evidence="1">ATP-dependent Clp protease adapter protein ClpS</fullName>
    </recommendedName>
</protein>
<comment type="function">
    <text evidence="1">Involved in the modulation of the specificity of the ClpAP-mediated ATP-dependent protein degradation.</text>
</comment>
<comment type="subunit">
    <text evidence="1">Binds to the N-terminal domain of the chaperone ClpA.</text>
</comment>
<comment type="similarity">
    <text evidence="1">Belongs to the ClpS family.</text>
</comment>
<comment type="sequence caution" evidence="3">
    <conflict type="erroneous initiation">
        <sequence resource="EMBL-CDS" id="AAG06009"/>
    </conflict>
</comment>
<proteinExistence type="inferred from homology"/>
<name>CLPS_PSEAE</name>